<accession>P10496</accession>
<feature type="signal peptide" evidence="1">
    <location>
        <begin position="1"/>
        <end position="30"/>
    </location>
</feature>
<feature type="chain" id="PRO_0000021381" description="Glycine-rich cell wall structural protein 1.8">
    <location>
        <begin position="31"/>
        <end position="465"/>
    </location>
</feature>
<feature type="repeat" description="1">
    <location>
        <begin position="205"/>
        <end position="226"/>
    </location>
</feature>
<feature type="repeat" description="2">
    <location>
        <begin position="227"/>
        <end position="248"/>
    </location>
</feature>
<feature type="repeat" description="3">
    <location>
        <begin position="249"/>
        <end position="270"/>
    </location>
</feature>
<feature type="repeat" description="4">
    <location>
        <begin position="271"/>
        <end position="292"/>
    </location>
</feature>
<feature type="repeat" description="5">
    <location>
        <begin position="293"/>
        <end position="314"/>
    </location>
</feature>
<feature type="repeat" description="6">
    <location>
        <begin position="315"/>
        <end position="336"/>
    </location>
</feature>
<feature type="repeat" description="7">
    <location>
        <begin position="337"/>
        <end position="358"/>
    </location>
</feature>
<feature type="repeat" description="8">
    <location>
        <begin position="359"/>
        <end position="380"/>
    </location>
</feature>
<feature type="region of interest" description="8 X 22 AA tandem repeats of H-G-G-G-[GAY]-G-G-G-Q-G-G-G-[AD]-G-G-G-Y-[GA]-[AT]-[GV]-G-E">
    <location>
        <begin position="205"/>
        <end position="380"/>
    </location>
</feature>
<comment type="function">
    <text evidence="3">Responsible for plasticity of the cell wall.</text>
</comment>
<comment type="subcellular location">
    <subcellularLocation>
        <location evidence="3">Secreted</location>
        <location evidence="3">Cell wall</location>
    </subcellularLocation>
</comment>
<comment type="tissue specificity">
    <text evidence="2">Expressed in young hypocotyls.</text>
</comment>
<comment type="domain">
    <text>The repeated domains of the protein form a beta-pleated sheet configuration.</text>
</comment>
<evidence type="ECO:0000255" key="1"/>
<evidence type="ECO:0000269" key="2">
    <source>
    </source>
</evidence>
<evidence type="ECO:0000305" key="3"/>
<organism>
    <name type="scientific">Phaseolus vulgaris</name>
    <name type="common">Kidney bean</name>
    <name type="synonym">French bean</name>
    <dbReference type="NCBI Taxonomy" id="3885"/>
    <lineage>
        <taxon>Eukaryota</taxon>
        <taxon>Viridiplantae</taxon>
        <taxon>Streptophyta</taxon>
        <taxon>Embryophyta</taxon>
        <taxon>Tracheophyta</taxon>
        <taxon>Spermatophyta</taxon>
        <taxon>Magnoliopsida</taxon>
        <taxon>eudicotyledons</taxon>
        <taxon>Gunneridae</taxon>
        <taxon>Pentapetalae</taxon>
        <taxon>rosids</taxon>
        <taxon>fabids</taxon>
        <taxon>Fabales</taxon>
        <taxon>Fabaceae</taxon>
        <taxon>Papilionoideae</taxon>
        <taxon>50 kb inversion clade</taxon>
        <taxon>NPAAA clade</taxon>
        <taxon>indigoferoid/millettioid clade</taxon>
        <taxon>Phaseoleae</taxon>
        <taxon>Phaseolus</taxon>
    </lineage>
</organism>
<sequence length="465" mass="36682">MATIHRLPSLVFLVLLALGVCSARRALLTLDAGYGLGHGTGGGYGGAAGSYGGGGGGGSGGGGGYAGEHGVVGYGGGSGGGQGGGVGYGGDQGAGYGGGGGSGGGGGVAYGGGGERGGYGGGQGGGAGGGYGAGGEHGIGYGGGGGSGAGGGGGYNAGGAQGGGYGTGGGAGGGGGGGGDHGGGYGGGQGAGGGAGGGYGGGGEHGGGGGGGQGGGAGGGYGAGGEHGGGAGGGQGGGAGGGYGAGGEHGGGAGGGQGGGAGGGYGAGGEHGGGAGGGQGGGAGGGYGAGGEHGGGAGGGQGGGAGGGYGAGGEHGGGGGGGQGGGAGGGYAAVGEHGGGYGGGQGGGDGGGYGTGGEHGGGYGGGQGGGAGGGYGTGGEHGGGYGGGQGGGGGYGAGGDHGAAGYGGGEGGGGGSGGGYGDGGAHGGGYGGGAGGGGGYGAGGAHGGGYGGGGGIGGGHGGNVP</sequence>
<name>GRP2_PHAVU</name>
<protein>
    <recommendedName>
        <fullName>Glycine-rich cell wall structural protein 1.8</fullName>
        <shortName>GRP 1.8</shortName>
    </recommendedName>
</protein>
<keyword id="KW-0134">Cell wall</keyword>
<keyword id="KW-0961">Cell wall biogenesis/degradation</keyword>
<keyword id="KW-0677">Repeat</keyword>
<keyword id="KW-0964">Secreted</keyword>
<keyword id="KW-0732">Signal</keyword>
<dbReference type="EMBL" id="X13596">
    <property type="protein sequence ID" value="CAA31932.1"/>
    <property type="molecule type" value="Genomic_DNA"/>
</dbReference>
<dbReference type="PIR" id="S01820">
    <property type="entry name" value="S01820"/>
</dbReference>
<dbReference type="SMR" id="P10496"/>
<dbReference type="GO" id="GO:0005576">
    <property type="term" value="C:extracellular region"/>
    <property type="evidence" value="ECO:0007669"/>
    <property type="project" value="UniProtKB-KW"/>
</dbReference>
<dbReference type="GO" id="GO:0071555">
    <property type="term" value="P:cell wall organization"/>
    <property type="evidence" value="ECO:0007669"/>
    <property type="project" value="UniProtKB-KW"/>
</dbReference>
<dbReference type="PRINTS" id="PR01228">
    <property type="entry name" value="EGGSHELL"/>
</dbReference>
<proteinExistence type="evidence at transcript level"/>
<reference key="1">
    <citation type="journal article" date="1988" name="EMBO J.">
        <title>Glycine-rich cell wall proteins in bean: gene structure and association of the protein with the vascular system.</title>
        <authorList>
            <person name="Keller B."/>
            <person name="Sauer N."/>
            <person name="Lamb C.J."/>
        </authorList>
    </citation>
    <scope>NUCLEOTIDE SEQUENCE [GENOMIC DNA]</scope>
    <scope>TISSUE SPECIFICITY</scope>
    <source>
        <strain>cv. Tendergreen</strain>
    </source>
</reference>